<accession>A1KS34</accession>
<proteinExistence type="inferred from homology"/>
<dbReference type="EC" id="5.4.3.8" evidence="1"/>
<dbReference type="EMBL" id="AM421808">
    <property type="protein sequence ID" value="CAM09664.1"/>
    <property type="molecule type" value="Genomic_DNA"/>
</dbReference>
<dbReference type="RefSeq" id="WP_002248132.1">
    <property type="nucleotide sequence ID" value="NC_008767.1"/>
</dbReference>
<dbReference type="SMR" id="A1KS34"/>
<dbReference type="KEGG" id="nmc:NMC0354"/>
<dbReference type="HOGENOM" id="CLU_016922_1_5_4"/>
<dbReference type="UniPathway" id="UPA00251">
    <property type="reaction ID" value="UER00317"/>
</dbReference>
<dbReference type="Proteomes" id="UP000002286">
    <property type="component" value="Chromosome"/>
</dbReference>
<dbReference type="GO" id="GO:0005737">
    <property type="term" value="C:cytoplasm"/>
    <property type="evidence" value="ECO:0007669"/>
    <property type="project" value="UniProtKB-SubCell"/>
</dbReference>
<dbReference type="GO" id="GO:0042286">
    <property type="term" value="F:glutamate-1-semialdehyde 2,1-aminomutase activity"/>
    <property type="evidence" value="ECO:0007669"/>
    <property type="project" value="UniProtKB-UniRule"/>
</dbReference>
<dbReference type="GO" id="GO:0030170">
    <property type="term" value="F:pyridoxal phosphate binding"/>
    <property type="evidence" value="ECO:0007669"/>
    <property type="project" value="InterPro"/>
</dbReference>
<dbReference type="GO" id="GO:0008483">
    <property type="term" value="F:transaminase activity"/>
    <property type="evidence" value="ECO:0007669"/>
    <property type="project" value="InterPro"/>
</dbReference>
<dbReference type="GO" id="GO:0006782">
    <property type="term" value="P:protoporphyrinogen IX biosynthetic process"/>
    <property type="evidence" value="ECO:0007669"/>
    <property type="project" value="UniProtKB-UniRule"/>
</dbReference>
<dbReference type="CDD" id="cd00610">
    <property type="entry name" value="OAT_like"/>
    <property type="match status" value="1"/>
</dbReference>
<dbReference type="FunFam" id="3.40.640.10:FF:000021">
    <property type="entry name" value="Glutamate-1-semialdehyde 2,1-aminomutase"/>
    <property type="match status" value="1"/>
</dbReference>
<dbReference type="Gene3D" id="3.90.1150.10">
    <property type="entry name" value="Aspartate Aminotransferase, domain 1"/>
    <property type="match status" value="1"/>
</dbReference>
<dbReference type="Gene3D" id="3.40.640.10">
    <property type="entry name" value="Type I PLP-dependent aspartate aminotransferase-like (Major domain)"/>
    <property type="match status" value="1"/>
</dbReference>
<dbReference type="HAMAP" id="MF_00375">
    <property type="entry name" value="HemL_aminotrans_3"/>
    <property type="match status" value="1"/>
</dbReference>
<dbReference type="InterPro" id="IPR004639">
    <property type="entry name" value="4pyrrol_synth_GluAld_NH2Trfase"/>
</dbReference>
<dbReference type="InterPro" id="IPR005814">
    <property type="entry name" value="Aminotrans_3"/>
</dbReference>
<dbReference type="InterPro" id="IPR049704">
    <property type="entry name" value="Aminotrans_3_PPA_site"/>
</dbReference>
<dbReference type="InterPro" id="IPR015424">
    <property type="entry name" value="PyrdxlP-dep_Trfase"/>
</dbReference>
<dbReference type="InterPro" id="IPR015421">
    <property type="entry name" value="PyrdxlP-dep_Trfase_major"/>
</dbReference>
<dbReference type="InterPro" id="IPR015422">
    <property type="entry name" value="PyrdxlP-dep_Trfase_small"/>
</dbReference>
<dbReference type="NCBIfam" id="TIGR00713">
    <property type="entry name" value="hemL"/>
    <property type="match status" value="1"/>
</dbReference>
<dbReference type="NCBIfam" id="NF000818">
    <property type="entry name" value="PRK00062.1"/>
    <property type="match status" value="1"/>
</dbReference>
<dbReference type="PANTHER" id="PTHR43713">
    <property type="entry name" value="GLUTAMATE-1-SEMIALDEHYDE 2,1-AMINOMUTASE"/>
    <property type="match status" value="1"/>
</dbReference>
<dbReference type="PANTHER" id="PTHR43713:SF3">
    <property type="entry name" value="GLUTAMATE-1-SEMIALDEHYDE 2,1-AMINOMUTASE 1, CHLOROPLASTIC-RELATED"/>
    <property type="match status" value="1"/>
</dbReference>
<dbReference type="Pfam" id="PF00202">
    <property type="entry name" value="Aminotran_3"/>
    <property type="match status" value="1"/>
</dbReference>
<dbReference type="SUPFAM" id="SSF53383">
    <property type="entry name" value="PLP-dependent transferases"/>
    <property type="match status" value="1"/>
</dbReference>
<dbReference type="PROSITE" id="PS00600">
    <property type="entry name" value="AA_TRANSFER_CLASS_3"/>
    <property type="match status" value="1"/>
</dbReference>
<keyword id="KW-0963">Cytoplasm</keyword>
<keyword id="KW-0413">Isomerase</keyword>
<keyword id="KW-0627">Porphyrin biosynthesis</keyword>
<keyword id="KW-0663">Pyridoxal phosphate</keyword>
<protein>
    <recommendedName>
        <fullName evidence="1">Glutamate-1-semialdehyde 2,1-aminomutase</fullName>
        <shortName evidence="1">GSA</shortName>
        <ecNumber evidence="1">5.4.3.8</ecNumber>
    </recommendedName>
    <alternativeName>
        <fullName evidence="1">Glutamate-1-semialdehyde aminotransferase</fullName>
        <shortName evidence="1">GSA-AT</shortName>
    </alternativeName>
</protein>
<reference key="1">
    <citation type="journal article" date="2007" name="PLoS Genet.">
        <title>Meningococcal genetic variation mechanisms viewed through comparative analysis of serogroup C strain FAM18.</title>
        <authorList>
            <person name="Bentley S.D."/>
            <person name="Vernikos G.S."/>
            <person name="Snyder L.A.S."/>
            <person name="Churcher C."/>
            <person name="Arrowsmith C."/>
            <person name="Chillingworth T."/>
            <person name="Cronin A."/>
            <person name="Davis P.H."/>
            <person name="Holroyd N.E."/>
            <person name="Jagels K."/>
            <person name="Maddison M."/>
            <person name="Moule S."/>
            <person name="Rabbinowitsch E."/>
            <person name="Sharp S."/>
            <person name="Unwin L."/>
            <person name="Whitehead S."/>
            <person name="Quail M.A."/>
            <person name="Achtman M."/>
            <person name="Barrell B.G."/>
            <person name="Saunders N.J."/>
            <person name="Parkhill J."/>
        </authorList>
    </citation>
    <scope>NUCLEOTIDE SEQUENCE [LARGE SCALE GENOMIC DNA]</scope>
    <source>
        <strain>ATCC 700532 / DSM 15464 / FAM18</strain>
    </source>
</reference>
<name>GSA_NEIMF</name>
<gene>
    <name evidence="1" type="primary">hemL</name>
    <name type="ordered locus">NMC0354</name>
</gene>
<evidence type="ECO:0000255" key="1">
    <source>
        <dbReference type="HAMAP-Rule" id="MF_00375"/>
    </source>
</evidence>
<comment type="catalytic activity">
    <reaction evidence="1">
        <text>(S)-4-amino-5-oxopentanoate = 5-aminolevulinate</text>
        <dbReference type="Rhea" id="RHEA:14265"/>
        <dbReference type="ChEBI" id="CHEBI:57501"/>
        <dbReference type="ChEBI" id="CHEBI:356416"/>
        <dbReference type="EC" id="5.4.3.8"/>
    </reaction>
</comment>
<comment type="cofactor">
    <cofactor evidence="1">
        <name>pyridoxal 5'-phosphate</name>
        <dbReference type="ChEBI" id="CHEBI:597326"/>
    </cofactor>
</comment>
<comment type="pathway">
    <text evidence="1">Porphyrin-containing compound metabolism; protoporphyrin-IX biosynthesis; 5-aminolevulinate from L-glutamyl-tRNA(Glu): step 2/2.</text>
</comment>
<comment type="subunit">
    <text evidence="1">Homodimer.</text>
</comment>
<comment type="subcellular location">
    <subcellularLocation>
        <location evidence="1">Cytoplasm</location>
    </subcellularLocation>
</comment>
<comment type="similarity">
    <text evidence="1">Belongs to the class-III pyridoxal-phosphate-dependent aminotransferase family. HemL subfamily.</text>
</comment>
<sequence>MNRNEILFDRAKAIIPGGVNSPVRAFGSVGGVPRFIKKAEGAYVWDENGTRYTDYVGSWGPAIVGHAHPEVIEAMREAALGGLSFGAPTEGEIVIAEEIAKIMPSVERLRLVSSGTEATMTAIRLARGFTGRDKIIKFEGCYHGHSDSLLVKAGSGLLTFGNPSSAGVPADFTKHTLVLEYNNIAQLEEAFAQSGNDIACVILEPFVGNMNLVRPSEAFVKALRELTEKHGAVLIYDEVMTGFRVALGGAQSLHGITPDLTTMGKVIGGGMPLAAFGGRKDIMECISPLGGVYQAGTLSGNPIAVAAGLKTLEIIRREGFYENLTARTEQLVQGFRTAADAAGIEFTADSVGGMFGLYFAAHAPRNYADMARSNIDAFKRFFHGMLDRGIAFGPSAYEAGFVSAAHTPELIDETVAVAVEVFKAMAA</sequence>
<organism>
    <name type="scientific">Neisseria meningitidis serogroup C / serotype 2a (strain ATCC 700532 / DSM 15464 / FAM18)</name>
    <dbReference type="NCBI Taxonomy" id="272831"/>
    <lineage>
        <taxon>Bacteria</taxon>
        <taxon>Pseudomonadati</taxon>
        <taxon>Pseudomonadota</taxon>
        <taxon>Betaproteobacteria</taxon>
        <taxon>Neisseriales</taxon>
        <taxon>Neisseriaceae</taxon>
        <taxon>Neisseria</taxon>
    </lineage>
</organism>
<feature type="chain" id="PRO_0000300929" description="Glutamate-1-semialdehyde 2,1-aminomutase">
    <location>
        <begin position="1"/>
        <end position="427"/>
    </location>
</feature>
<feature type="modified residue" description="N6-(pyridoxal phosphate)lysine" evidence="1">
    <location>
        <position position="265"/>
    </location>
</feature>